<keyword id="KW-0963">Cytoplasm</keyword>
<keyword id="KW-0931">ER-Golgi transport</keyword>
<keyword id="KW-0539">Nucleus</keyword>
<keyword id="KW-1185">Reference proteome</keyword>
<keyword id="KW-0813">Transport</keyword>
<comment type="function">
    <text evidence="1">May play a role in vesicular transport from endoplasmic reticulum to Golgi.</text>
</comment>
<comment type="subunit">
    <text evidence="1">Part of the multisubunit TRAPP (transport protein particle) complex.</text>
</comment>
<comment type="subcellular location">
    <subcellularLocation>
        <location evidence="2">Cytoplasm</location>
        <location evidence="2">Perinuclear region</location>
    </subcellularLocation>
    <subcellularLocation>
        <location evidence="2">Nucleus</location>
    </subcellularLocation>
    <subcellularLocation>
        <location evidence="2">Endoplasmic reticulum-Golgi intermediate compartment</location>
    </subcellularLocation>
    <subcellularLocation>
        <location evidence="2">Cytoplasm</location>
    </subcellularLocation>
    <text evidence="2">Localized in perinuclear granular structures.</text>
</comment>
<comment type="similarity">
    <text evidence="3">Belongs to the TRAPP small subunits family. Sedlin subfamily.</text>
</comment>
<feature type="chain" id="PRO_0000412456" description="Trafficking protein particle complex subunit 2">
    <location>
        <begin position="1"/>
        <end position="140"/>
    </location>
</feature>
<feature type="sequence conflict" description="In Ref. 1; CAG31699." evidence="3" ref="1">
    <original>AFVL</original>
    <variation>VTAG</variation>
    <location>
        <begin position="76"/>
        <end position="79"/>
    </location>
</feature>
<dbReference type="EMBL" id="AJ720040">
    <property type="protein sequence ID" value="CAG31699.1"/>
    <property type="molecule type" value="mRNA"/>
</dbReference>
<dbReference type="EMBL" id="AADN02011353">
    <property type="status" value="NOT_ANNOTATED_CDS"/>
    <property type="molecule type" value="Genomic_DNA"/>
</dbReference>
<dbReference type="RefSeq" id="NP_001006263.1">
    <property type="nucleotide sequence ID" value="NM_001006263.1"/>
</dbReference>
<dbReference type="RefSeq" id="XP_015129039.1">
    <property type="nucleotide sequence ID" value="XM_015273553.1"/>
</dbReference>
<dbReference type="SMR" id="Q5ZKP4"/>
<dbReference type="FunCoup" id="Q5ZKP4">
    <property type="interactions" value="881"/>
</dbReference>
<dbReference type="STRING" id="9031.ENSGALP00000026710"/>
<dbReference type="PaxDb" id="9031-ENSGALP00000026710"/>
<dbReference type="Ensembl" id="ENSGALT00000026761">
    <property type="protein sequence ID" value="ENSGALP00000026710"/>
    <property type="gene ID" value="ENSGALG00000016578"/>
</dbReference>
<dbReference type="Ensembl" id="ENSGALT00010005564.1">
    <property type="protein sequence ID" value="ENSGALP00010003403.1"/>
    <property type="gene ID" value="ENSGALG00010002418.1"/>
</dbReference>
<dbReference type="GeneID" id="418634"/>
<dbReference type="KEGG" id="gga:418634"/>
<dbReference type="CTD" id="6399"/>
<dbReference type="VEuPathDB" id="HostDB:geneid_418634"/>
<dbReference type="eggNOG" id="KOG3487">
    <property type="taxonomic scope" value="Eukaryota"/>
</dbReference>
<dbReference type="GeneTree" id="ENSGT00940000164277"/>
<dbReference type="HOGENOM" id="CLU_085828_0_2_1"/>
<dbReference type="InParanoid" id="Q5ZKP4"/>
<dbReference type="OrthoDB" id="10252102at2759"/>
<dbReference type="TreeFam" id="TF314814"/>
<dbReference type="Reactome" id="R-GGA-204005">
    <property type="pathway name" value="COPII-mediated vesicle transport"/>
</dbReference>
<dbReference type="PRO" id="PR:Q5ZKP4"/>
<dbReference type="Proteomes" id="UP000000539">
    <property type="component" value="Chromosome 1"/>
</dbReference>
<dbReference type="Bgee" id="ENSGALG00000016578">
    <property type="expression patterns" value="Expressed in spermatid and 14 other cell types or tissues"/>
</dbReference>
<dbReference type="GO" id="GO:0005737">
    <property type="term" value="C:cytoplasm"/>
    <property type="evidence" value="ECO:0000318"/>
    <property type="project" value="GO_Central"/>
</dbReference>
<dbReference type="GO" id="GO:0005793">
    <property type="term" value="C:endoplasmic reticulum-Golgi intermediate compartment"/>
    <property type="evidence" value="ECO:0007669"/>
    <property type="project" value="UniProtKB-SubCell"/>
</dbReference>
<dbReference type="GO" id="GO:0005634">
    <property type="term" value="C:nucleus"/>
    <property type="evidence" value="ECO:0000250"/>
    <property type="project" value="UniProtKB"/>
</dbReference>
<dbReference type="GO" id="GO:0048471">
    <property type="term" value="C:perinuclear region of cytoplasm"/>
    <property type="evidence" value="ECO:0007669"/>
    <property type="project" value="UniProtKB-SubCell"/>
</dbReference>
<dbReference type="GO" id="GO:0030008">
    <property type="term" value="C:TRAPP complex"/>
    <property type="evidence" value="ECO:0000318"/>
    <property type="project" value="GO_Central"/>
</dbReference>
<dbReference type="GO" id="GO:0006888">
    <property type="term" value="P:endoplasmic reticulum to Golgi vesicle-mediated transport"/>
    <property type="evidence" value="ECO:0000318"/>
    <property type="project" value="GO_Central"/>
</dbReference>
<dbReference type="CDD" id="cd14825">
    <property type="entry name" value="TRAPPC2_sedlin"/>
    <property type="match status" value="1"/>
</dbReference>
<dbReference type="FunFam" id="3.30.450.70:FF:000001">
    <property type="entry name" value="Trafficking protein particle complex subunit 2"/>
    <property type="match status" value="1"/>
</dbReference>
<dbReference type="Gene3D" id="3.30.450.70">
    <property type="match status" value="1"/>
</dbReference>
<dbReference type="InterPro" id="IPR011012">
    <property type="entry name" value="Longin-like_dom_sf"/>
</dbReference>
<dbReference type="InterPro" id="IPR006722">
    <property type="entry name" value="Sedlin"/>
</dbReference>
<dbReference type="PANTHER" id="PTHR12403">
    <property type="entry name" value="TRAFFICKING PROTEIN PARTICLE COMPLEX SUBUNIT 2"/>
    <property type="match status" value="1"/>
</dbReference>
<dbReference type="Pfam" id="PF04628">
    <property type="entry name" value="Sedlin_N"/>
    <property type="match status" value="1"/>
</dbReference>
<dbReference type="SUPFAM" id="SSF64356">
    <property type="entry name" value="SNARE-like"/>
    <property type="match status" value="1"/>
</dbReference>
<organism>
    <name type="scientific">Gallus gallus</name>
    <name type="common">Chicken</name>
    <dbReference type="NCBI Taxonomy" id="9031"/>
    <lineage>
        <taxon>Eukaryota</taxon>
        <taxon>Metazoa</taxon>
        <taxon>Chordata</taxon>
        <taxon>Craniata</taxon>
        <taxon>Vertebrata</taxon>
        <taxon>Euteleostomi</taxon>
        <taxon>Archelosauria</taxon>
        <taxon>Archosauria</taxon>
        <taxon>Dinosauria</taxon>
        <taxon>Saurischia</taxon>
        <taxon>Theropoda</taxon>
        <taxon>Coelurosauria</taxon>
        <taxon>Aves</taxon>
        <taxon>Neognathae</taxon>
        <taxon>Galloanserae</taxon>
        <taxon>Galliformes</taxon>
        <taxon>Phasianidae</taxon>
        <taxon>Phasianinae</taxon>
        <taxon>Gallus</taxon>
    </lineage>
</organism>
<gene>
    <name type="primary">TRAPPC2</name>
    <name type="ORF">RCJMB04_9m16</name>
</gene>
<sequence length="140" mass="16586">MSGSFYFVIVGHHDNPVFEMEFLPPGKAESKDDHRHLNQFIAHAALDLVDENMWLSNNMYLKTVDKFNEWFVSAFAFVLHMRFIMLHDVRQEDGIKNFFNDVYDLYIKFAMNPFYELNSPIRSSAFERKVQFLGKKHLLS</sequence>
<accession>Q5ZKP4</accession>
<accession>F1NGQ4</accession>
<protein>
    <recommendedName>
        <fullName>Trafficking protein particle complex subunit 2</fullName>
    </recommendedName>
</protein>
<name>TPPC2_CHICK</name>
<evidence type="ECO:0000250" key="1"/>
<evidence type="ECO:0000250" key="2">
    <source>
        <dbReference type="UniProtKB" id="P0DI81"/>
    </source>
</evidence>
<evidence type="ECO:0000305" key="3"/>
<proteinExistence type="evidence at transcript level"/>
<reference key="1">
    <citation type="journal article" date="2005" name="Genome Biol.">
        <title>Full-length cDNAs from chicken bursal lymphocytes to facilitate gene function analysis.</title>
        <authorList>
            <person name="Caldwell R.B."/>
            <person name="Kierzek A.M."/>
            <person name="Arakawa H."/>
            <person name="Bezzubov Y."/>
            <person name="Zaim J."/>
            <person name="Fiedler P."/>
            <person name="Kutter S."/>
            <person name="Blagodatski A."/>
            <person name="Kostovska D."/>
            <person name="Koter M."/>
            <person name="Plachy J."/>
            <person name="Carninci P."/>
            <person name="Hayashizaki Y."/>
            <person name="Buerstedde J.-M."/>
        </authorList>
    </citation>
    <scope>NUCLEOTIDE SEQUENCE [LARGE SCALE MRNA]</scope>
    <source>
        <strain>CB</strain>
        <tissue>Bursa of Fabricius</tissue>
    </source>
</reference>
<reference key="2">
    <citation type="journal article" date="2004" name="Nature">
        <title>Sequence and comparative analysis of the chicken genome provide unique perspectives on vertebrate evolution.</title>
        <authorList>
            <person name="Hillier L.W."/>
            <person name="Miller W."/>
            <person name="Birney E."/>
            <person name="Warren W."/>
            <person name="Hardison R.C."/>
            <person name="Ponting C.P."/>
            <person name="Bork P."/>
            <person name="Burt D.W."/>
            <person name="Groenen M.A.M."/>
            <person name="Delany M.E."/>
            <person name="Dodgson J.B."/>
            <person name="Chinwalla A.T."/>
            <person name="Cliften P.F."/>
            <person name="Clifton S.W."/>
            <person name="Delehaunty K.D."/>
            <person name="Fronick C."/>
            <person name="Fulton R.S."/>
            <person name="Graves T.A."/>
            <person name="Kremitzki C."/>
            <person name="Layman D."/>
            <person name="Magrini V."/>
            <person name="McPherson J.D."/>
            <person name="Miner T.L."/>
            <person name="Minx P."/>
            <person name="Nash W.E."/>
            <person name="Nhan M.N."/>
            <person name="Nelson J.O."/>
            <person name="Oddy L.G."/>
            <person name="Pohl C.S."/>
            <person name="Randall-Maher J."/>
            <person name="Smith S.M."/>
            <person name="Wallis J.W."/>
            <person name="Yang S.-P."/>
            <person name="Romanov M.N."/>
            <person name="Rondelli C.M."/>
            <person name="Paton B."/>
            <person name="Smith J."/>
            <person name="Morrice D."/>
            <person name="Daniels L."/>
            <person name="Tempest H.G."/>
            <person name="Robertson L."/>
            <person name="Masabanda J.S."/>
            <person name="Griffin D.K."/>
            <person name="Vignal A."/>
            <person name="Fillon V."/>
            <person name="Jacobbson L."/>
            <person name="Kerje S."/>
            <person name="Andersson L."/>
            <person name="Crooijmans R.P."/>
            <person name="Aerts J."/>
            <person name="van der Poel J.J."/>
            <person name="Ellegren H."/>
            <person name="Caldwell R.B."/>
            <person name="Hubbard S.J."/>
            <person name="Grafham D.V."/>
            <person name="Kierzek A.M."/>
            <person name="McLaren S.R."/>
            <person name="Overton I.M."/>
            <person name="Arakawa H."/>
            <person name="Beattie K.J."/>
            <person name="Bezzubov Y."/>
            <person name="Boardman P.E."/>
            <person name="Bonfield J.K."/>
            <person name="Croning M.D.R."/>
            <person name="Davies R.M."/>
            <person name="Francis M.D."/>
            <person name="Humphray S.J."/>
            <person name="Scott C.E."/>
            <person name="Taylor R.G."/>
            <person name="Tickle C."/>
            <person name="Brown W.R.A."/>
            <person name="Rogers J."/>
            <person name="Buerstedde J.-M."/>
            <person name="Wilson S.A."/>
            <person name="Stubbs L."/>
            <person name="Ovcharenko I."/>
            <person name="Gordon L."/>
            <person name="Lucas S."/>
            <person name="Miller M.M."/>
            <person name="Inoko H."/>
            <person name="Shiina T."/>
            <person name="Kaufman J."/>
            <person name="Salomonsen J."/>
            <person name="Skjoedt K."/>
            <person name="Wong G.K.-S."/>
            <person name="Wang J."/>
            <person name="Liu B."/>
            <person name="Wang J."/>
            <person name="Yu J."/>
            <person name="Yang H."/>
            <person name="Nefedov M."/>
            <person name="Koriabine M."/>
            <person name="Dejong P.J."/>
            <person name="Goodstadt L."/>
            <person name="Webber C."/>
            <person name="Dickens N.J."/>
            <person name="Letunic I."/>
            <person name="Suyama M."/>
            <person name="Torrents D."/>
            <person name="von Mering C."/>
            <person name="Zdobnov E.M."/>
            <person name="Makova K."/>
            <person name="Nekrutenko A."/>
            <person name="Elnitski L."/>
            <person name="Eswara P."/>
            <person name="King D.C."/>
            <person name="Yang S.-P."/>
            <person name="Tyekucheva S."/>
            <person name="Radakrishnan A."/>
            <person name="Harris R.S."/>
            <person name="Chiaromonte F."/>
            <person name="Taylor J."/>
            <person name="He J."/>
            <person name="Rijnkels M."/>
            <person name="Griffiths-Jones S."/>
            <person name="Ureta-Vidal A."/>
            <person name="Hoffman M.M."/>
            <person name="Severin J."/>
            <person name="Searle S.M.J."/>
            <person name="Law A.S."/>
            <person name="Speed D."/>
            <person name="Waddington D."/>
            <person name="Cheng Z."/>
            <person name="Tuzun E."/>
            <person name="Eichler E."/>
            <person name="Bao Z."/>
            <person name="Flicek P."/>
            <person name="Shteynberg D.D."/>
            <person name="Brent M.R."/>
            <person name="Bye J.M."/>
            <person name="Huckle E.J."/>
            <person name="Chatterji S."/>
            <person name="Dewey C."/>
            <person name="Pachter L."/>
            <person name="Kouranov A."/>
            <person name="Mourelatos Z."/>
            <person name="Hatzigeorgiou A.G."/>
            <person name="Paterson A.H."/>
            <person name="Ivarie R."/>
            <person name="Brandstrom M."/>
            <person name="Axelsson E."/>
            <person name="Backstrom N."/>
            <person name="Berlin S."/>
            <person name="Webster M.T."/>
            <person name="Pourquie O."/>
            <person name="Reymond A."/>
            <person name="Ucla C."/>
            <person name="Antonarakis S.E."/>
            <person name="Long M."/>
            <person name="Emerson J.J."/>
            <person name="Betran E."/>
            <person name="Dupanloup I."/>
            <person name="Kaessmann H."/>
            <person name="Hinrichs A.S."/>
            <person name="Bejerano G."/>
            <person name="Furey T.S."/>
            <person name="Harte R.A."/>
            <person name="Raney B."/>
            <person name="Siepel A."/>
            <person name="Kent W.J."/>
            <person name="Haussler D."/>
            <person name="Eyras E."/>
            <person name="Castelo R."/>
            <person name="Abril J.F."/>
            <person name="Castellano S."/>
            <person name="Camara F."/>
            <person name="Parra G."/>
            <person name="Guigo R."/>
            <person name="Bourque G."/>
            <person name="Tesler G."/>
            <person name="Pevzner P.A."/>
            <person name="Smit A."/>
            <person name="Fulton L.A."/>
            <person name="Mardis E.R."/>
            <person name="Wilson R.K."/>
        </authorList>
    </citation>
    <scope>NUCLEOTIDE SEQUENCE [LARGE SCALE GENOMIC DNA]</scope>
    <source>
        <strain>Red jungle fowl</strain>
    </source>
</reference>